<gene>
    <name evidence="1" type="primary">purL</name>
    <name type="ordered locus">SAB0936</name>
</gene>
<feature type="chain" id="PRO_0000236665" description="Phosphoribosylformylglycinamidine synthase subunit PurL">
    <location>
        <begin position="1"/>
        <end position="729"/>
    </location>
</feature>
<feature type="active site" evidence="1">
    <location>
        <position position="54"/>
    </location>
</feature>
<feature type="active site" description="Proton acceptor" evidence="1">
    <location>
        <position position="100"/>
    </location>
</feature>
<feature type="binding site" evidence="1">
    <location>
        <position position="57"/>
    </location>
    <ligand>
        <name>ATP</name>
        <dbReference type="ChEBI" id="CHEBI:30616"/>
    </ligand>
</feature>
<feature type="binding site" evidence="1">
    <location>
        <position position="96"/>
    </location>
    <ligand>
        <name>ATP</name>
        <dbReference type="ChEBI" id="CHEBI:30616"/>
    </ligand>
</feature>
<feature type="binding site" evidence="1">
    <location>
        <position position="98"/>
    </location>
    <ligand>
        <name>Mg(2+)</name>
        <dbReference type="ChEBI" id="CHEBI:18420"/>
        <label>1</label>
    </ligand>
</feature>
<feature type="binding site" evidence="1">
    <location>
        <begin position="99"/>
        <end position="102"/>
    </location>
    <ligand>
        <name>substrate</name>
    </ligand>
</feature>
<feature type="binding site" evidence="1">
    <location>
        <position position="121"/>
    </location>
    <ligand>
        <name>substrate</name>
    </ligand>
</feature>
<feature type="binding site" evidence="1">
    <location>
        <position position="122"/>
    </location>
    <ligand>
        <name>Mg(2+)</name>
        <dbReference type="ChEBI" id="CHEBI:18420"/>
        <label>2</label>
    </ligand>
</feature>
<feature type="binding site" evidence="1">
    <location>
        <position position="245"/>
    </location>
    <ligand>
        <name>substrate</name>
    </ligand>
</feature>
<feature type="binding site" evidence="1">
    <location>
        <position position="273"/>
    </location>
    <ligand>
        <name>Mg(2+)</name>
        <dbReference type="ChEBI" id="CHEBI:18420"/>
        <label>2</label>
    </ligand>
</feature>
<feature type="binding site" evidence="1">
    <location>
        <begin position="317"/>
        <end position="319"/>
    </location>
    <ligand>
        <name>substrate</name>
    </ligand>
</feature>
<feature type="binding site" evidence="1">
    <location>
        <position position="495"/>
    </location>
    <ligand>
        <name>ATP</name>
        <dbReference type="ChEBI" id="CHEBI:30616"/>
    </ligand>
</feature>
<feature type="binding site" evidence="1">
    <location>
        <position position="532"/>
    </location>
    <ligand>
        <name>ATP</name>
        <dbReference type="ChEBI" id="CHEBI:30616"/>
    </ligand>
</feature>
<feature type="binding site" evidence="1">
    <location>
        <position position="533"/>
    </location>
    <ligand>
        <name>Mg(2+)</name>
        <dbReference type="ChEBI" id="CHEBI:18420"/>
        <label>1</label>
    </ligand>
</feature>
<feature type="binding site" evidence="1">
    <location>
        <position position="535"/>
    </location>
    <ligand>
        <name>substrate</name>
    </ligand>
</feature>
<accession>Q2YX54</accession>
<evidence type="ECO:0000255" key="1">
    <source>
        <dbReference type="HAMAP-Rule" id="MF_00420"/>
    </source>
</evidence>
<proteinExistence type="inferred from homology"/>
<comment type="function">
    <text evidence="1">Part of the phosphoribosylformylglycinamidine synthase complex involved in the purines biosynthetic pathway. Catalyzes the ATP-dependent conversion of formylglycinamide ribonucleotide (FGAR) and glutamine to yield formylglycinamidine ribonucleotide (FGAM) and glutamate. The FGAM synthase complex is composed of three subunits. PurQ produces an ammonia molecule by converting glutamine to glutamate. PurL transfers the ammonia molecule to FGAR to form FGAM in an ATP-dependent manner. PurS interacts with PurQ and PurL and is thought to assist in the transfer of the ammonia molecule from PurQ to PurL.</text>
</comment>
<comment type="catalytic activity">
    <reaction evidence="1">
        <text>N(2)-formyl-N(1)-(5-phospho-beta-D-ribosyl)glycinamide + L-glutamine + ATP + H2O = 2-formamido-N(1)-(5-O-phospho-beta-D-ribosyl)acetamidine + L-glutamate + ADP + phosphate + H(+)</text>
        <dbReference type="Rhea" id="RHEA:17129"/>
        <dbReference type="ChEBI" id="CHEBI:15377"/>
        <dbReference type="ChEBI" id="CHEBI:15378"/>
        <dbReference type="ChEBI" id="CHEBI:29985"/>
        <dbReference type="ChEBI" id="CHEBI:30616"/>
        <dbReference type="ChEBI" id="CHEBI:43474"/>
        <dbReference type="ChEBI" id="CHEBI:58359"/>
        <dbReference type="ChEBI" id="CHEBI:147286"/>
        <dbReference type="ChEBI" id="CHEBI:147287"/>
        <dbReference type="ChEBI" id="CHEBI:456216"/>
        <dbReference type="EC" id="6.3.5.3"/>
    </reaction>
</comment>
<comment type="pathway">
    <text evidence="1">Purine metabolism; IMP biosynthesis via de novo pathway; 5-amino-1-(5-phospho-D-ribosyl)imidazole from N(2)-formyl-N(1)-(5-phospho-D-ribosyl)glycinamide: step 1/2.</text>
</comment>
<comment type="subunit">
    <text evidence="1">Monomer. Part of the FGAM synthase complex composed of 1 PurL, 1 PurQ and 2 PurS subunits.</text>
</comment>
<comment type="subcellular location">
    <subcellularLocation>
        <location evidence="1">Cytoplasm</location>
    </subcellularLocation>
</comment>
<comment type="similarity">
    <text evidence="1">Belongs to the FGAMS family.</text>
</comment>
<reference key="1">
    <citation type="journal article" date="2007" name="PLoS ONE">
        <title>Molecular correlates of host specialization in Staphylococcus aureus.</title>
        <authorList>
            <person name="Herron-Olson L."/>
            <person name="Fitzgerald J.R."/>
            <person name="Musser J.M."/>
            <person name="Kapur V."/>
        </authorList>
    </citation>
    <scope>NUCLEOTIDE SEQUENCE [LARGE SCALE GENOMIC DNA]</scope>
    <source>
        <strain>bovine RF122 / ET3-1</strain>
    </source>
</reference>
<protein>
    <recommendedName>
        <fullName evidence="1">Phosphoribosylformylglycinamidine synthase subunit PurL</fullName>
        <shortName evidence="1">FGAM synthase</shortName>
        <ecNumber evidence="1">6.3.5.3</ecNumber>
    </recommendedName>
    <alternativeName>
        <fullName evidence="1">Formylglycinamide ribonucleotide amidotransferase subunit II</fullName>
        <shortName evidence="1">FGAR amidotransferase II</shortName>
        <shortName evidence="1">FGAR-AT II</shortName>
    </alternativeName>
    <alternativeName>
        <fullName evidence="1">Glutamine amidotransferase PurL</fullName>
    </alternativeName>
    <alternativeName>
        <fullName evidence="1">Phosphoribosylformylglycinamidine synthase subunit II</fullName>
    </alternativeName>
</protein>
<sequence>MSKFIEPSVEEIKLEKVYQDMGLSDQEYEKVCDILGRQPNFTETGIFSVMWSEHCSYKHSKPFLKQFPTSGEHVLMGPGEGAGVVDIGDNQAVVFKVESHNHPSAIEPYQGAATGVGGIIRDIVSIGARPINLLNSLRFGELDNKQNQRLLKGVVKGIGGYGNCIGIPTTAGEIEFDERYDGNPLVNAMCVGVINHDMIQKGTAKGVGNSVIYVGLKTGRDGIHGATFASEELTEESESKRPSVQIGDPFVGKKLMEATLEAITFDELVGIQDMGAAGLTSSSSEMAAKGGSGLHLRLEQVPTREPGISPYEMMLSETQERMLLVVEKGTEQKFLDLFDKHELDSAVIGEVTDTNRFVLTYDDEVYADIPVEPLADEAPVFILEGEEKNYNTSKNDYTHIDVKDTFFKLLKHPTIASKHYLYDQYDQQVGANTIIKPGLQASVVRVEGTNKAIASTIDGEARYVYNNPYEGGKMVVAEAYRNLIAVGATPLAMTDCLNYGSPEKKEIYQQLIDSTKGMAEACDILKTPVVSGNVSLYNETKGTSIFPTPVVGMVGLIENVNYLNDFEPQVGDKLYLIGDTKDDFGGSQLEKLIYGKVNHEFESLDLSSESEKGESIKTAIREGVLSHVQTVGKGGLLITLAKLSAHYGLGLKSSIDITNTQLFSETQGRYVVSVKSGKTLNIDNAIEIGLLTDSDNFKVTTPYTEISENVSDIKQIWEGAIAQCLTTQD</sequence>
<dbReference type="EC" id="6.3.5.3" evidence="1"/>
<dbReference type="EMBL" id="AJ938182">
    <property type="protein sequence ID" value="CAI80624.1"/>
    <property type="molecule type" value="Genomic_DNA"/>
</dbReference>
<dbReference type="RefSeq" id="WP_000032743.1">
    <property type="nucleotide sequence ID" value="NC_007622.1"/>
</dbReference>
<dbReference type="SMR" id="Q2YX54"/>
<dbReference type="KEGG" id="sab:SAB0936"/>
<dbReference type="HOGENOM" id="CLU_003100_0_1_9"/>
<dbReference type="UniPathway" id="UPA00074">
    <property type="reaction ID" value="UER00128"/>
</dbReference>
<dbReference type="GO" id="GO:0005737">
    <property type="term" value="C:cytoplasm"/>
    <property type="evidence" value="ECO:0007669"/>
    <property type="project" value="UniProtKB-SubCell"/>
</dbReference>
<dbReference type="GO" id="GO:0005524">
    <property type="term" value="F:ATP binding"/>
    <property type="evidence" value="ECO:0007669"/>
    <property type="project" value="UniProtKB-UniRule"/>
</dbReference>
<dbReference type="GO" id="GO:0000287">
    <property type="term" value="F:magnesium ion binding"/>
    <property type="evidence" value="ECO:0007669"/>
    <property type="project" value="UniProtKB-UniRule"/>
</dbReference>
<dbReference type="GO" id="GO:0004642">
    <property type="term" value="F:phosphoribosylformylglycinamidine synthase activity"/>
    <property type="evidence" value="ECO:0007669"/>
    <property type="project" value="UniProtKB-UniRule"/>
</dbReference>
<dbReference type="GO" id="GO:0006189">
    <property type="term" value="P:'de novo' IMP biosynthetic process"/>
    <property type="evidence" value="ECO:0007669"/>
    <property type="project" value="UniProtKB-UniRule"/>
</dbReference>
<dbReference type="CDD" id="cd02203">
    <property type="entry name" value="PurL_repeat1"/>
    <property type="match status" value="1"/>
</dbReference>
<dbReference type="CDD" id="cd02204">
    <property type="entry name" value="PurL_repeat2"/>
    <property type="match status" value="1"/>
</dbReference>
<dbReference type="FunFam" id="3.30.1330.10:FF:000004">
    <property type="entry name" value="Phosphoribosylformylglycinamidine synthase subunit PurL"/>
    <property type="match status" value="1"/>
</dbReference>
<dbReference type="Gene3D" id="3.90.650.10">
    <property type="entry name" value="PurM-like C-terminal domain"/>
    <property type="match status" value="2"/>
</dbReference>
<dbReference type="Gene3D" id="3.30.1330.10">
    <property type="entry name" value="PurM-like, N-terminal domain"/>
    <property type="match status" value="2"/>
</dbReference>
<dbReference type="HAMAP" id="MF_00420">
    <property type="entry name" value="PurL_2"/>
    <property type="match status" value="1"/>
</dbReference>
<dbReference type="InterPro" id="IPR010074">
    <property type="entry name" value="PRibForGlyAmidine_synth_PurL"/>
</dbReference>
<dbReference type="InterPro" id="IPR041609">
    <property type="entry name" value="PurL_linker"/>
</dbReference>
<dbReference type="InterPro" id="IPR010918">
    <property type="entry name" value="PurM-like_C_dom"/>
</dbReference>
<dbReference type="InterPro" id="IPR036676">
    <property type="entry name" value="PurM-like_C_sf"/>
</dbReference>
<dbReference type="InterPro" id="IPR016188">
    <property type="entry name" value="PurM-like_N"/>
</dbReference>
<dbReference type="InterPro" id="IPR036921">
    <property type="entry name" value="PurM-like_N_sf"/>
</dbReference>
<dbReference type="NCBIfam" id="TIGR01736">
    <property type="entry name" value="FGAM_synth_II"/>
    <property type="match status" value="1"/>
</dbReference>
<dbReference type="NCBIfam" id="NF002290">
    <property type="entry name" value="PRK01213.1"/>
    <property type="match status" value="1"/>
</dbReference>
<dbReference type="PANTHER" id="PTHR43555">
    <property type="entry name" value="PHOSPHORIBOSYLFORMYLGLYCINAMIDINE SYNTHASE SUBUNIT PURL"/>
    <property type="match status" value="1"/>
</dbReference>
<dbReference type="PANTHER" id="PTHR43555:SF1">
    <property type="entry name" value="PHOSPHORIBOSYLFORMYLGLYCINAMIDINE SYNTHASE SUBUNIT PURL"/>
    <property type="match status" value="1"/>
</dbReference>
<dbReference type="Pfam" id="PF00586">
    <property type="entry name" value="AIRS"/>
    <property type="match status" value="2"/>
</dbReference>
<dbReference type="Pfam" id="PF02769">
    <property type="entry name" value="AIRS_C"/>
    <property type="match status" value="1"/>
</dbReference>
<dbReference type="Pfam" id="PF18072">
    <property type="entry name" value="FGAR-AT_linker"/>
    <property type="match status" value="1"/>
</dbReference>
<dbReference type="PIRSF" id="PIRSF001587">
    <property type="entry name" value="FGAM_synthase_II"/>
    <property type="match status" value="1"/>
</dbReference>
<dbReference type="SUPFAM" id="SSF56042">
    <property type="entry name" value="PurM C-terminal domain-like"/>
    <property type="match status" value="2"/>
</dbReference>
<dbReference type="SUPFAM" id="SSF55326">
    <property type="entry name" value="PurM N-terminal domain-like"/>
    <property type="match status" value="2"/>
</dbReference>
<keyword id="KW-0067">ATP-binding</keyword>
<keyword id="KW-0963">Cytoplasm</keyword>
<keyword id="KW-0436">Ligase</keyword>
<keyword id="KW-0460">Magnesium</keyword>
<keyword id="KW-0479">Metal-binding</keyword>
<keyword id="KW-0547">Nucleotide-binding</keyword>
<keyword id="KW-0658">Purine biosynthesis</keyword>
<name>PURL_STAAB</name>
<organism>
    <name type="scientific">Staphylococcus aureus (strain bovine RF122 / ET3-1)</name>
    <dbReference type="NCBI Taxonomy" id="273036"/>
    <lineage>
        <taxon>Bacteria</taxon>
        <taxon>Bacillati</taxon>
        <taxon>Bacillota</taxon>
        <taxon>Bacilli</taxon>
        <taxon>Bacillales</taxon>
        <taxon>Staphylococcaceae</taxon>
        <taxon>Staphylococcus</taxon>
    </lineage>
</organism>